<accession>Q1CD76</accession>
<accession>D1Q282</accession>
<protein>
    <recommendedName>
        <fullName evidence="1">Putative transport protein YPN_3727</fullName>
    </recommendedName>
</protein>
<comment type="subcellular location">
    <subcellularLocation>
        <location evidence="1">Cell membrane</location>
        <topology evidence="1">Multi-pass membrane protein</topology>
    </subcellularLocation>
</comment>
<comment type="similarity">
    <text evidence="1">Belongs to the AAE transporter (TC 2.A.81) family. YidE subfamily.</text>
</comment>
<keyword id="KW-1003">Cell membrane</keyword>
<keyword id="KW-0472">Membrane</keyword>
<keyword id="KW-0677">Repeat</keyword>
<keyword id="KW-0812">Transmembrane</keyword>
<keyword id="KW-1133">Transmembrane helix</keyword>
<keyword id="KW-0813">Transport</keyword>
<name>Y3727_YERPN</name>
<evidence type="ECO:0000255" key="1">
    <source>
        <dbReference type="HAMAP-Rule" id="MF_01016"/>
    </source>
</evidence>
<sequence>MSAIALTVSMLALVAVLGLWIGNWKIYGVGLGIGGVLFGGIIVGHFAQTYQIVLNGDMLHFIQEFGLILFVYTIGIQVGPGFFSSLRVSGLRLNCFAILMVVVGGLVTAIIHKLFAVPLPIILGVFSGAVTNTPALGAAQQILTDLGSPPQLVSQMGMGYAMAYPFGICGILLVMWLIRLFFKINIDREAKAFDSSYGQNRELLQTMNVAVRNPNLHGLSVQDVPLLNSDEVVCSRLKRGDLLMVPMPATVIEIGDYLHLVGQRDALEKVRLVVGEEVDVTLSTAGTALQTARVVVTNEAVLGKKIRDLNLKQKYDVVITRLNRAGIELVASNSASLQFGDILNLVGRPEAIEAVSAIVGNAQQKLQQVQMLPVFIGVGLGVLLGSIPLFVPGFPAALRLGLAGGPLVVALILGRIGSIGKLYWFMPPSANLALRELGIVLFLSVVGLKSGGDFINTLVNGDGLAWIGYGAMITGIPLLTVGILARMLVKMNYLTLCGMLAGSMTDPPALAFANGLHPTSGAAALSYATVYPLAMFLRIMSPQILAVLFWTL</sequence>
<gene>
    <name type="ordered locus">YPN_3727</name>
    <name type="ORF">YP516_4238</name>
</gene>
<feature type="chain" id="PRO_1000063260" description="Putative transport protein YPN_3727">
    <location>
        <begin position="1"/>
        <end position="552"/>
    </location>
</feature>
<feature type="transmembrane region" description="Helical" evidence="1">
    <location>
        <begin position="1"/>
        <end position="21"/>
    </location>
</feature>
<feature type="transmembrane region" description="Helical" evidence="1">
    <location>
        <begin position="26"/>
        <end position="46"/>
    </location>
</feature>
<feature type="transmembrane region" description="Helical" evidence="1">
    <location>
        <begin position="65"/>
        <end position="85"/>
    </location>
</feature>
<feature type="transmembrane region" description="Helical" evidence="1">
    <location>
        <begin position="96"/>
        <end position="116"/>
    </location>
</feature>
<feature type="transmembrane region" description="Helical" evidence="1">
    <location>
        <begin position="119"/>
        <end position="139"/>
    </location>
</feature>
<feature type="transmembrane region" description="Helical" evidence="1">
    <location>
        <begin position="158"/>
        <end position="178"/>
    </location>
</feature>
<feature type="transmembrane region" description="Helical" evidence="1">
    <location>
        <begin position="371"/>
        <end position="391"/>
    </location>
</feature>
<feature type="transmembrane region" description="Helical" evidence="1">
    <location>
        <begin position="393"/>
        <end position="413"/>
    </location>
</feature>
<feature type="transmembrane region" description="Helical" evidence="1">
    <location>
        <begin position="439"/>
        <end position="459"/>
    </location>
</feature>
<feature type="transmembrane region" description="Helical" evidence="1">
    <location>
        <begin position="464"/>
        <end position="484"/>
    </location>
</feature>
<feature type="transmembrane region" description="Helical" evidence="1">
    <location>
        <begin position="493"/>
        <end position="513"/>
    </location>
</feature>
<feature type="transmembrane region" description="Helical" evidence="1">
    <location>
        <begin position="530"/>
        <end position="550"/>
    </location>
</feature>
<feature type="domain" description="RCK C-terminal 1" evidence="1">
    <location>
        <begin position="192"/>
        <end position="276"/>
    </location>
</feature>
<feature type="domain" description="RCK C-terminal 2" evidence="1">
    <location>
        <begin position="279"/>
        <end position="361"/>
    </location>
</feature>
<dbReference type="EMBL" id="CP000305">
    <property type="protein sequence ID" value="ABG20054.1"/>
    <property type="molecule type" value="Genomic_DNA"/>
</dbReference>
<dbReference type="EMBL" id="ACNQ01000019">
    <property type="protein sequence ID" value="EEO74635.1"/>
    <property type="molecule type" value="Genomic_DNA"/>
</dbReference>
<dbReference type="RefSeq" id="WP_002209634.1">
    <property type="nucleotide sequence ID" value="NZ_ACNQ01000019.1"/>
</dbReference>
<dbReference type="SMR" id="Q1CD76"/>
<dbReference type="KEGG" id="ypn:YPN_3727"/>
<dbReference type="HOGENOM" id="CLU_035023_3_1_6"/>
<dbReference type="Proteomes" id="UP000008936">
    <property type="component" value="Chromosome"/>
</dbReference>
<dbReference type="GO" id="GO:0005886">
    <property type="term" value="C:plasma membrane"/>
    <property type="evidence" value="ECO:0007669"/>
    <property type="project" value="UniProtKB-SubCell"/>
</dbReference>
<dbReference type="GO" id="GO:0008324">
    <property type="term" value="F:monoatomic cation transmembrane transporter activity"/>
    <property type="evidence" value="ECO:0007669"/>
    <property type="project" value="InterPro"/>
</dbReference>
<dbReference type="GO" id="GO:0006813">
    <property type="term" value="P:potassium ion transport"/>
    <property type="evidence" value="ECO:0007669"/>
    <property type="project" value="InterPro"/>
</dbReference>
<dbReference type="Gene3D" id="3.30.70.1450">
    <property type="entry name" value="Regulator of K+ conductance, C-terminal domain"/>
    <property type="match status" value="2"/>
</dbReference>
<dbReference type="HAMAP" id="MF_01016">
    <property type="entry name" value="YidE"/>
    <property type="match status" value="1"/>
</dbReference>
<dbReference type="InterPro" id="IPR050144">
    <property type="entry name" value="AAE_transporter"/>
</dbReference>
<dbReference type="InterPro" id="IPR006037">
    <property type="entry name" value="RCK_C"/>
</dbReference>
<dbReference type="InterPro" id="IPR036721">
    <property type="entry name" value="RCK_C_sf"/>
</dbReference>
<dbReference type="InterPro" id="IPR023018">
    <property type="entry name" value="Transpt_YidE_put"/>
</dbReference>
<dbReference type="InterPro" id="IPR006512">
    <property type="entry name" value="YidE_YbjL"/>
</dbReference>
<dbReference type="NCBIfam" id="NF003007">
    <property type="entry name" value="PRK03818.1"/>
    <property type="match status" value="1"/>
</dbReference>
<dbReference type="NCBIfam" id="TIGR01625">
    <property type="entry name" value="YidE_YbjL_dupl"/>
    <property type="match status" value="2"/>
</dbReference>
<dbReference type="PANTHER" id="PTHR30445">
    <property type="entry name" value="K(+)_H(+) ANTIPORTER SUBUNIT KHTT"/>
    <property type="match status" value="1"/>
</dbReference>
<dbReference type="PANTHER" id="PTHR30445:SF3">
    <property type="entry name" value="TRANSPORT PROTEIN YIDE-RELATED"/>
    <property type="match status" value="1"/>
</dbReference>
<dbReference type="Pfam" id="PF06826">
    <property type="entry name" value="Asp-Al_Ex"/>
    <property type="match status" value="2"/>
</dbReference>
<dbReference type="Pfam" id="PF02080">
    <property type="entry name" value="TrkA_C"/>
    <property type="match status" value="2"/>
</dbReference>
<dbReference type="SUPFAM" id="SSF116726">
    <property type="entry name" value="TrkA C-terminal domain-like"/>
    <property type="match status" value="2"/>
</dbReference>
<dbReference type="PROSITE" id="PS51202">
    <property type="entry name" value="RCK_C"/>
    <property type="match status" value="2"/>
</dbReference>
<organism>
    <name type="scientific">Yersinia pestis bv. Antiqua (strain Nepal516)</name>
    <dbReference type="NCBI Taxonomy" id="377628"/>
    <lineage>
        <taxon>Bacteria</taxon>
        <taxon>Pseudomonadati</taxon>
        <taxon>Pseudomonadota</taxon>
        <taxon>Gammaproteobacteria</taxon>
        <taxon>Enterobacterales</taxon>
        <taxon>Yersiniaceae</taxon>
        <taxon>Yersinia</taxon>
    </lineage>
</organism>
<proteinExistence type="inferred from homology"/>
<reference key="1">
    <citation type="journal article" date="2006" name="J. Bacteriol.">
        <title>Complete genome sequence of Yersinia pestis strains Antiqua and Nepal516: evidence of gene reduction in an emerging pathogen.</title>
        <authorList>
            <person name="Chain P.S.G."/>
            <person name="Hu P."/>
            <person name="Malfatti S.A."/>
            <person name="Radnedge L."/>
            <person name="Larimer F."/>
            <person name="Vergez L.M."/>
            <person name="Worsham P."/>
            <person name="Chu M.C."/>
            <person name="Andersen G.L."/>
        </authorList>
    </citation>
    <scope>NUCLEOTIDE SEQUENCE [LARGE SCALE GENOMIC DNA]</scope>
    <source>
        <strain>Nepal516</strain>
    </source>
</reference>
<reference key="2">
    <citation type="submission" date="2009-04" db="EMBL/GenBank/DDBJ databases">
        <title>Yersinia pestis Nepal516A whole genome shotgun sequencing project.</title>
        <authorList>
            <person name="Plunkett G. III"/>
            <person name="Anderson B.D."/>
            <person name="Baumler D.J."/>
            <person name="Burland V."/>
            <person name="Cabot E.L."/>
            <person name="Glasner J.D."/>
            <person name="Mau B."/>
            <person name="Neeno-Eckwall E."/>
            <person name="Perna N.T."/>
            <person name="Munk A.C."/>
            <person name="Tapia R."/>
            <person name="Green L.D."/>
            <person name="Rogers Y.C."/>
            <person name="Detter J.C."/>
            <person name="Bruce D.C."/>
            <person name="Brettin T.S."/>
        </authorList>
    </citation>
    <scope>NUCLEOTIDE SEQUENCE [LARGE SCALE GENOMIC DNA]</scope>
    <source>
        <strain>Nepal516</strain>
    </source>
</reference>